<keyword id="KW-1015">Disulfide bond</keyword>
<keyword id="KW-0964">Secreted</keyword>
<keyword id="KW-0732">Signal</keyword>
<keyword id="KW-0800">Toxin</keyword>
<accession>P0DPZ3</accession>
<feature type="signal peptide" evidence="1">
    <location>
        <begin position="1"/>
        <end position="19"/>
    </location>
</feature>
<feature type="chain" id="PRO_0000446761" description="U-scoloptoxin(11)-Sm1a" evidence="3">
    <location>
        <begin position="20"/>
        <end position="133"/>
    </location>
</feature>
<dbReference type="GO" id="GO:0005576">
    <property type="term" value="C:extracellular region"/>
    <property type="evidence" value="ECO:0007669"/>
    <property type="project" value="UniProtKB-SubCell"/>
</dbReference>
<dbReference type="GO" id="GO:0090729">
    <property type="term" value="F:toxin activity"/>
    <property type="evidence" value="ECO:0007669"/>
    <property type="project" value="UniProtKB-KW"/>
</dbReference>
<evidence type="ECO:0000255" key="1"/>
<evidence type="ECO:0000303" key="2">
    <source>
    </source>
</evidence>
<evidence type="ECO:0000305" key="3"/>
<evidence type="ECO:0000305" key="4">
    <source>
    </source>
</evidence>
<sequence length="133" mass="14974">MIWFLAFILFLAAGELVSSSGLLNCEPSEIAYEEITRQGQKSTNTLCKCKYEPYKFSTATSKDKTTVTVQYKCKQVRPCVYGQKCQSLEDGPQEKALKTHCTCAKGQQCHSTPEHADESRIFGDTKYYSFVCV</sequence>
<proteinExistence type="evidence at transcript level"/>
<organism>
    <name type="scientific">Scolopendra morsitans</name>
    <name type="common">Tanzanian blue ringleg centipede</name>
    <dbReference type="NCBI Taxonomy" id="943129"/>
    <lineage>
        <taxon>Eukaryota</taxon>
        <taxon>Metazoa</taxon>
        <taxon>Ecdysozoa</taxon>
        <taxon>Arthropoda</taxon>
        <taxon>Myriapoda</taxon>
        <taxon>Chilopoda</taxon>
        <taxon>Pleurostigmophora</taxon>
        <taxon>Scolopendromorpha</taxon>
        <taxon>Scolopendridae</taxon>
        <taxon>Scolopendra</taxon>
    </lineage>
</organism>
<reference key="1">
    <citation type="journal article" date="2014" name="Mol. Biol. Evol.">
        <title>Clawing through evolution: toxin diversification and convergence in the ancient lineage Chilopoda (centipedes).</title>
        <authorList>
            <person name="Undheim E.A."/>
            <person name="Jones A."/>
            <person name="Clauser K.R."/>
            <person name="Holland J.W."/>
            <person name="Pineda S.S."/>
            <person name="King G.F."/>
            <person name="Fry B.G."/>
        </authorList>
    </citation>
    <scope>NUCLEOTIDE SEQUENCE [MRNA]</scope>
    <scope>NOMENCLATURE</scope>
    <source>
        <tissue>Venom gland</tissue>
    </source>
</reference>
<comment type="subcellular location">
    <subcellularLocation>
        <location evidence="4">Secreted</location>
    </subcellularLocation>
</comment>
<comment type="tissue specificity">
    <text evidence="4">Expressed by the venom gland.</text>
</comment>
<comment type="PTM">
    <text evidence="3">Contains 10 disulfide bonds.</text>
</comment>
<comment type="similarity">
    <text evidence="3">Belongs to the scoloptoxin-11 family.</text>
</comment>
<comment type="caution">
    <text evidence="4">All S.morsitans family members described in 'Undeheim et al., 2014' have not been imported into UniProtKB. Please, refer to this paper to access them.</text>
</comment>
<comment type="online information" name="National Center for Biotechnology Information (NCBI)">
    <link uri="https://www.ncbi.nlm.nih.gov/nuccore/GASH01000121"/>
</comment>
<name>TXB1A_SCOMO</name>
<protein>
    <recommendedName>
        <fullName evidence="2">U-scoloptoxin(11)-Sm1a</fullName>
        <shortName evidence="2">U-SLPTX(11)-Sm1a</shortName>
    </recommendedName>
</protein>